<proteinExistence type="inferred from homology"/>
<name>AROA_ALKMQ</name>
<accession>A6TL04</accession>
<evidence type="ECO:0000255" key="1">
    <source>
        <dbReference type="HAMAP-Rule" id="MF_00210"/>
    </source>
</evidence>
<keyword id="KW-0028">Amino-acid biosynthesis</keyword>
<keyword id="KW-0057">Aromatic amino acid biosynthesis</keyword>
<keyword id="KW-0963">Cytoplasm</keyword>
<keyword id="KW-1185">Reference proteome</keyword>
<keyword id="KW-0808">Transferase</keyword>
<gene>
    <name evidence="1" type="primary">aroA</name>
    <name type="ordered locus">Amet_0647</name>
</gene>
<comment type="function">
    <text evidence="1">Catalyzes the transfer of the enolpyruvyl moiety of phosphoenolpyruvate (PEP) to the 5-hydroxyl of shikimate-3-phosphate (S3P) to produce enolpyruvyl shikimate-3-phosphate and inorganic phosphate.</text>
</comment>
<comment type="catalytic activity">
    <reaction evidence="1">
        <text>3-phosphoshikimate + phosphoenolpyruvate = 5-O-(1-carboxyvinyl)-3-phosphoshikimate + phosphate</text>
        <dbReference type="Rhea" id="RHEA:21256"/>
        <dbReference type="ChEBI" id="CHEBI:43474"/>
        <dbReference type="ChEBI" id="CHEBI:57701"/>
        <dbReference type="ChEBI" id="CHEBI:58702"/>
        <dbReference type="ChEBI" id="CHEBI:145989"/>
        <dbReference type="EC" id="2.5.1.19"/>
    </reaction>
    <physiologicalReaction direction="left-to-right" evidence="1">
        <dbReference type="Rhea" id="RHEA:21257"/>
    </physiologicalReaction>
</comment>
<comment type="pathway">
    <text evidence="1">Metabolic intermediate biosynthesis; chorismate biosynthesis; chorismate from D-erythrose 4-phosphate and phosphoenolpyruvate: step 6/7.</text>
</comment>
<comment type="subunit">
    <text evidence="1">Monomer.</text>
</comment>
<comment type="subcellular location">
    <subcellularLocation>
        <location evidence="1">Cytoplasm</location>
    </subcellularLocation>
</comment>
<comment type="similarity">
    <text evidence="1">Belongs to the EPSP synthase family.</text>
</comment>
<reference key="1">
    <citation type="journal article" date="2016" name="Genome Announc.">
        <title>Complete genome sequence of Alkaliphilus metalliredigens strain QYMF, an alkaliphilic and metal-reducing bacterium isolated from borax-contaminated leachate ponds.</title>
        <authorList>
            <person name="Hwang C."/>
            <person name="Copeland A."/>
            <person name="Lucas S."/>
            <person name="Lapidus A."/>
            <person name="Barry K."/>
            <person name="Detter J.C."/>
            <person name="Glavina Del Rio T."/>
            <person name="Hammon N."/>
            <person name="Israni S."/>
            <person name="Dalin E."/>
            <person name="Tice H."/>
            <person name="Pitluck S."/>
            <person name="Chertkov O."/>
            <person name="Brettin T."/>
            <person name="Bruce D."/>
            <person name="Han C."/>
            <person name="Schmutz J."/>
            <person name="Larimer F."/>
            <person name="Land M.L."/>
            <person name="Hauser L."/>
            <person name="Kyrpides N."/>
            <person name="Mikhailova N."/>
            <person name="Ye Q."/>
            <person name="Zhou J."/>
            <person name="Richardson P."/>
            <person name="Fields M.W."/>
        </authorList>
    </citation>
    <scope>NUCLEOTIDE SEQUENCE [LARGE SCALE GENOMIC DNA]</scope>
    <source>
        <strain>QYMF</strain>
    </source>
</reference>
<organism>
    <name type="scientific">Alkaliphilus metalliredigens (strain QYMF)</name>
    <dbReference type="NCBI Taxonomy" id="293826"/>
    <lineage>
        <taxon>Bacteria</taxon>
        <taxon>Bacillati</taxon>
        <taxon>Bacillota</taxon>
        <taxon>Clostridia</taxon>
        <taxon>Peptostreptococcales</taxon>
        <taxon>Natronincolaceae</taxon>
        <taxon>Alkaliphilus</taxon>
    </lineage>
</organism>
<feature type="chain" id="PRO_0000325328" description="3-phosphoshikimate 1-carboxyvinyltransferase">
    <location>
        <begin position="1"/>
        <end position="425"/>
    </location>
</feature>
<feature type="active site" description="Proton acceptor" evidence="1">
    <location>
        <position position="312"/>
    </location>
</feature>
<feature type="binding site" evidence="1">
    <location>
        <position position="20"/>
    </location>
    <ligand>
        <name>3-phosphoshikimate</name>
        <dbReference type="ChEBI" id="CHEBI:145989"/>
    </ligand>
</feature>
<feature type="binding site" evidence="1">
    <location>
        <position position="20"/>
    </location>
    <ligand>
        <name>phosphoenolpyruvate</name>
        <dbReference type="ChEBI" id="CHEBI:58702"/>
    </ligand>
</feature>
<feature type="binding site" evidence="1">
    <location>
        <position position="21"/>
    </location>
    <ligand>
        <name>3-phosphoshikimate</name>
        <dbReference type="ChEBI" id="CHEBI:145989"/>
    </ligand>
</feature>
<feature type="binding site" evidence="1">
    <location>
        <position position="25"/>
    </location>
    <ligand>
        <name>3-phosphoshikimate</name>
        <dbReference type="ChEBI" id="CHEBI:145989"/>
    </ligand>
</feature>
<feature type="binding site" evidence="1">
    <location>
        <position position="92"/>
    </location>
    <ligand>
        <name>phosphoenolpyruvate</name>
        <dbReference type="ChEBI" id="CHEBI:58702"/>
    </ligand>
</feature>
<feature type="binding site" evidence="1">
    <location>
        <position position="120"/>
    </location>
    <ligand>
        <name>phosphoenolpyruvate</name>
        <dbReference type="ChEBI" id="CHEBI:58702"/>
    </ligand>
</feature>
<feature type="binding site" evidence="1">
    <location>
        <position position="165"/>
    </location>
    <ligand>
        <name>3-phosphoshikimate</name>
        <dbReference type="ChEBI" id="CHEBI:145989"/>
    </ligand>
</feature>
<feature type="binding site" evidence="1">
    <location>
        <position position="167"/>
    </location>
    <ligand>
        <name>3-phosphoshikimate</name>
        <dbReference type="ChEBI" id="CHEBI:145989"/>
    </ligand>
</feature>
<feature type="binding site" evidence="1">
    <location>
        <position position="167"/>
    </location>
    <ligand>
        <name>phosphoenolpyruvate</name>
        <dbReference type="ChEBI" id="CHEBI:58702"/>
    </ligand>
</feature>
<feature type="binding site" evidence="1">
    <location>
        <position position="312"/>
    </location>
    <ligand>
        <name>3-phosphoshikimate</name>
        <dbReference type="ChEBI" id="CHEBI:145989"/>
    </ligand>
</feature>
<feature type="binding site" evidence="1">
    <location>
        <position position="339"/>
    </location>
    <ligand>
        <name>3-phosphoshikimate</name>
        <dbReference type="ChEBI" id="CHEBI:145989"/>
    </ligand>
</feature>
<feature type="binding site" evidence="1">
    <location>
        <position position="343"/>
    </location>
    <ligand>
        <name>phosphoenolpyruvate</name>
        <dbReference type="ChEBI" id="CHEBI:58702"/>
    </ligand>
</feature>
<feature type="binding site" evidence="1">
    <location>
        <position position="385"/>
    </location>
    <ligand>
        <name>phosphoenolpyruvate</name>
        <dbReference type="ChEBI" id="CHEBI:58702"/>
    </ligand>
</feature>
<dbReference type="EC" id="2.5.1.19" evidence="1"/>
<dbReference type="EMBL" id="CP000724">
    <property type="protein sequence ID" value="ABR46872.1"/>
    <property type="molecule type" value="Genomic_DNA"/>
</dbReference>
<dbReference type="RefSeq" id="WP_011971780.1">
    <property type="nucleotide sequence ID" value="NC_009633.1"/>
</dbReference>
<dbReference type="SMR" id="A6TL04"/>
<dbReference type="STRING" id="293826.Amet_0647"/>
<dbReference type="KEGG" id="amt:Amet_0647"/>
<dbReference type="eggNOG" id="COG0128">
    <property type="taxonomic scope" value="Bacteria"/>
</dbReference>
<dbReference type="HOGENOM" id="CLU_024321_0_1_9"/>
<dbReference type="OrthoDB" id="9809920at2"/>
<dbReference type="BRENDA" id="2.5.1.19">
    <property type="organism ID" value="10142"/>
</dbReference>
<dbReference type="UniPathway" id="UPA00053">
    <property type="reaction ID" value="UER00089"/>
</dbReference>
<dbReference type="Proteomes" id="UP000001572">
    <property type="component" value="Chromosome"/>
</dbReference>
<dbReference type="GO" id="GO:0005737">
    <property type="term" value="C:cytoplasm"/>
    <property type="evidence" value="ECO:0007669"/>
    <property type="project" value="UniProtKB-SubCell"/>
</dbReference>
<dbReference type="GO" id="GO:0003866">
    <property type="term" value="F:3-phosphoshikimate 1-carboxyvinyltransferase activity"/>
    <property type="evidence" value="ECO:0007669"/>
    <property type="project" value="UniProtKB-UniRule"/>
</dbReference>
<dbReference type="GO" id="GO:0008652">
    <property type="term" value="P:amino acid biosynthetic process"/>
    <property type="evidence" value="ECO:0007669"/>
    <property type="project" value="UniProtKB-KW"/>
</dbReference>
<dbReference type="GO" id="GO:0009073">
    <property type="term" value="P:aromatic amino acid family biosynthetic process"/>
    <property type="evidence" value="ECO:0007669"/>
    <property type="project" value="UniProtKB-KW"/>
</dbReference>
<dbReference type="GO" id="GO:0009423">
    <property type="term" value="P:chorismate biosynthetic process"/>
    <property type="evidence" value="ECO:0007669"/>
    <property type="project" value="UniProtKB-UniRule"/>
</dbReference>
<dbReference type="CDD" id="cd01556">
    <property type="entry name" value="EPSP_synthase"/>
    <property type="match status" value="1"/>
</dbReference>
<dbReference type="FunFam" id="3.65.10.10:FF:000005">
    <property type="entry name" value="3-phosphoshikimate 1-carboxyvinyltransferase"/>
    <property type="match status" value="1"/>
</dbReference>
<dbReference type="FunFam" id="3.65.10.10:FF:000006">
    <property type="entry name" value="3-phosphoshikimate 1-carboxyvinyltransferase"/>
    <property type="match status" value="1"/>
</dbReference>
<dbReference type="Gene3D" id="3.65.10.10">
    <property type="entry name" value="Enolpyruvate transferase domain"/>
    <property type="match status" value="2"/>
</dbReference>
<dbReference type="HAMAP" id="MF_00210">
    <property type="entry name" value="EPSP_synth"/>
    <property type="match status" value="1"/>
</dbReference>
<dbReference type="InterPro" id="IPR001986">
    <property type="entry name" value="Enolpyruvate_Tfrase_dom"/>
</dbReference>
<dbReference type="InterPro" id="IPR036968">
    <property type="entry name" value="Enolpyruvate_Tfrase_sf"/>
</dbReference>
<dbReference type="InterPro" id="IPR006264">
    <property type="entry name" value="EPSP_synthase"/>
</dbReference>
<dbReference type="InterPro" id="IPR023193">
    <property type="entry name" value="EPSP_synthase_CS"/>
</dbReference>
<dbReference type="InterPro" id="IPR013792">
    <property type="entry name" value="RNA3'P_cycl/enolpyr_Trfase_a/b"/>
</dbReference>
<dbReference type="NCBIfam" id="TIGR01356">
    <property type="entry name" value="aroA"/>
    <property type="match status" value="1"/>
</dbReference>
<dbReference type="PANTHER" id="PTHR21090">
    <property type="entry name" value="AROM/DEHYDROQUINATE SYNTHASE"/>
    <property type="match status" value="1"/>
</dbReference>
<dbReference type="PANTHER" id="PTHR21090:SF5">
    <property type="entry name" value="PENTAFUNCTIONAL AROM POLYPEPTIDE"/>
    <property type="match status" value="1"/>
</dbReference>
<dbReference type="Pfam" id="PF00275">
    <property type="entry name" value="EPSP_synthase"/>
    <property type="match status" value="1"/>
</dbReference>
<dbReference type="PIRSF" id="PIRSF000505">
    <property type="entry name" value="EPSPS"/>
    <property type="match status" value="1"/>
</dbReference>
<dbReference type="SUPFAM" id="SSF55205">
    <property type="entry name" value="EPT/RTPC-like"/>
    <property type="match status" value="1"/>
</dbReference>
<dbReference type="PROSITE" id="PS00104">
    <property type="entry name" value="EPSP_SYNTHASE_1"/>
    <property type="match status" value="1"/>
</dbReference>
<dbReference type="PROSITE" id="PS00885">
    <property type="entry name" value="EPSP_SYNTHASE_2"/>
    <property type="match status" value="1"/>
</dbReference>
<protein>
    <recommendedName>
        <fullName evidence="1">3-phosphoshikimate 1-carboxyvinyltransferase</fullName>
        <ecNumber evidence="1">2.5.1.19</ecNumber>
    </recommendedName>
    <alternativeName>
        <fullName evidence="1">5-enolpyruvylshikimate-3-phosphate synthase</fullName>
        <shortName evidence="1">EPSP synthase</shortName>
        <shortName evidence="1">EPSPS</shortName>
    </alternativeName>
</protein>
<sequence length="425" mass="45468">MLVTNKVEKLEGKMTVPGDKSISHRAIMLSSISKGTSRVKGFLRGEDCLSTISCFRDLGIDIEDRGTEIIIQGKGLHGLSEPLNVLDAGNSGTTIRLISGILAGQKFLTIVTGDASLRKRPMERIATPLRKMGAFIEGRDYGNLAPLVIRGGNLKGMDYASPVSSAQVKSAILLAGLYGEGDTIVREKITSRDHTEKMLKGLGANISTDQGVTRLGKSELYGQSIEVPGDISSAAFFMAGAAALPGSFLITEGVGLNPTRTGIIDVLRDMGGDIEIHNLRQSGGEEIGDIMIRGKKLYGTEIGKEIIPRLIDEIPVLAIIAATAEGKTIITGAEELKVKESNRITAMVTEMQKVGIKVTELPDGMEIEGGQVITGGRVESYGDHRIAMAMAICGLFAQEPIKINDSQCIDISFPNFEEKLKAVVR</sequence>